<proteinExistence type="uncertain"/>
<evidence type="ECO:0000305" key="1"/>
<evidence type="ECO:0000305" key="2">
    <source>
    </source>
</evidence>
<evidence type="ECO:0000312" key="3">
    <source>
        <dbReference type="SGD" id="S000028792"/>
    </source>
</evidence>
<reference key="1">
    <citation type="journal article" date="1997" name="Nature">
        <title>The nucleotide sequence of Saccharomyces cerevisiae chromosome IX.</title>
        <authorList>
            <person name="Churcher C.M."/>
            <person name="Bowman S."/>
            <person name="Badcock K."/>
            <person name="Bankier A.T."/>
            <person name="Brown D."/>
            <person name="Chillingworth T."/>
            <person name="Connor R."/>
            <person name="Devlin K."/>
            <person name="Gentles S."/>
            <person name="Hamlin N."/>
            <person name="Harris D.E."/>
            <person name="Horsnell T."/>
            <person name="Hunt S."/>
            <person name="Jagels K."/>
            <person name="Jones M."/>
            <person name="Lye G."/>
            <person name="Moule S."/>
            <person name="Odell C."/>
            <person name="Pearson D."/>
            <person name="Rajandream M.A."/>
            <person name="Rice P."/>
            <person name="Rowley N."/>
            <person name="Skelton J."/>
            <person name="Smith V."/>
            <person name="Walsh S.V."/>
            <person name="Whitehead S."/>
            <person name="Barrell B.G."/>
        </authorList>
    </citation>
    <scope>NUCLEOTIDE SEQUENCE [LARGE SCALE GENOMIC DNA]</scope>
    <source>
        <strain>ATCC 204508 / S288c</strain>
    </source>
</reference>
<reference key="2">
    <citation type="journal article" date="2014" name="G3 (Bethesda)">
        <title>The reference genome sequence of Saccharomyces cerevisiae: Then and now.</title>
        <authorList>
            <person name="Engel S.R."/>
            <person name="Dietrich F.S."/>
            <person name="Fisk D.G."/>
            <person name="Binkley G."/>
            <person name="Balakrishnan R."/>
            <person name="Costanzo M.C."/>
            <person name="Dwight S.S."/>
            <person name="Hitz B.C."/>
            <person name="Karra K."/>
            <person name="Nash R.S."/>
            <person name="Weng S."/>
            <person name="Wong E.D."/>
            <person name="Lloyd P."/>
            <person name="Skrzypek M.S."/>
            <person name="Miyasato S.R."/>
            <person name="Simison M."/>
            <person name="Cherry J.M."/>
        </authorList>
    </citation>
    <scope>GENOME REANNOTATION</scope>
    <source>
        <strain>ATCC 204508 / S288c</strain>
    </source>
</reference>
<name>YI068_YEAST</name>
<comment type="miscellaneous">
    <text evidence="1">Partially overlaps SEC6.</text>
</comment>
<comment type="caution">
    <text evidence="2">Product of a dubious gene prediction unlikely to encode a functional protein. Because of that it is not part of the S.cerevisiae S288c complete/reference proteome set.</text>
</comment>
<sequence>MLYVISELFFFLVYRYCFSNSNTNRLIKVGSRSTPLASMLRRYSCNISVACCTIFFLSELLTSFLHFNIPTSKSMRESQYTSRYFCQISNMLSIGSQLRSMKNSITVKFCVISVSLLSLPSSTLTKS</sequence>
<dbReference type="EMBL" id="KJ412272">
    <property type="protein sequence ID" value="AHX39315.1"/>
    <property type="molecule type" value="Genomic_DNA"/>
</dbReference>
<dbReference type="PaxDb" id="4932-YIL068W-A"/>
<dbReference type="EnsemblFungi" id="YIL068W-A_mRNA">
    <property type="protein sequence ID" value="YIL068W-A"/>
    <property type="gene ID" value="YIL068W-A"/>
</dbReference>
<dbReference type="AGR" id="SGD:S000028792"/>
<dbReference type="SGD" id="S000028792">
    <property type="gene designation" value="YIL068W-A"/>
</dbReference>
<dbReference type="HOGENOM" id="CLU_1972190_0_0_1"/>
<gene>
    <name evidence="3" type="ordered locus">YIL068W-A</name>
</gene>
<feature type="chain" id="PRO_0000431036" description="Putative uncharacterized protein YIL068W-A">
    <location>
        <begin position="1"/>
        <end position="127"/>
    </location>
</feature>
<accession>A0A023PXN3</accession>
<protein>
    <recommendedName>
        <fullName evidence="1">Putative uncharacterized protein YIL068W-A</fullName>
    </recommendedName>
</protein>
<organism>
    <name type="scientific">Saccharomyces cerevisiae (strain ATCC 204508 / S288c)</name>
    <name type="common">Baker's yeast</name>
    <dbReference type="NCBI Taxonomy" id="559292"/>
    <lineage>
        <taxon>Eukaryota</taxon>
        <taxon>Fungi</taxon>
        <taxon>Dikarya</taxon>
        <taxon>Ascomycota</taxon>
        <taxon>Saccharomycotina</taxon>
        <taxon>Saccharomycetes</taxon>
        <taxon>Saccharomycetales</taxon>
        <taxon>Saccharomycetaceae</taxon>
        <taxon>Saccharomyces</taxon>
    </lineage>
</organism>